<feature type="chain" id="PRO_1000049140" description="Homoserine kinase">
    <location>
        <begin position="1"/>
        <end position="292"/>
    </location>
</feature>
<feature type="binding site" evidence="1">
    <location>
        <begin position="80"/>
        <end position="90"/>
    </location>
    <ligand>
        <name>ATP</name>
        <dbReference type="ChEBI" id="CHEBI:30616"/>
    </ligand>
</feature>
<organism>
    <name type="scientific">Leuconostoc mesenteroides subsp. mesenteroides (strain ATCC 8293 / DSM 20343 / BCRC 11652 / CCM 1803 / JCM 6124 / NCDO 523 / NBRC 100496 / NCIMB 8023 / NCTC 12954 / NRRL B-1118 / 37Y)</name>
    <dbReference type="NCBI Taxonomy" id="203120"/>
    <lineage>
        <taxon>Bacteria</taxon>
        <taxon>Bacillati</taxon>
        <taxon>Bacillota</taxon>
        <taxon>Bacilli</taxon>
        <taxon>Lactobacillales</taxon>
        <taxon>Lactobacillaceae</taxon>
        <taxon>Leuconostoc</taxon>
    </lineage>
</organism>
<dbReference type="EC" id="2.7.1.39" evidence="1"/>
<dbReference type="EMBL" id="CP000414">
    <property type="protein sequence ID" value="ABJ61894.1"/>
    <property type="molecule type" value="Genomic_DNA"/>
</dbReference>
<dbReference type="RefSeq" id="WP_011679564.1">
    <property type="nucleotide sequence ID" value="NC_008531.1"/>
</dbReference>
<dbReference type="SMR" id="Q03Y28"/>
<dbReference type="EnsemblBacteria" id="ABJ61894">
    <property type="protein sequence ID" value="ABJ61894"/>
    <property type="gene ID" value="LEUM_0785"/>
</dbReference>
<dbReference type="GeneID" id="29576180"/>
<dbReference type="KEGG" id="lme:LEUM_0785"/>
<dbReference type="eggNOG" id="COG0083">
    <property type="taxonomic scope" value="Bacteria"/>
</dbReference>
<dbReference type="HOGENOM" id="CLU_041243_0_0_9"/>
<dbReference type="UniPathway" id="UPA00050">
    <property type="reaction ID" value="UER00064"/>
</dbReference>
<dbReference type="Proteomes" id="UP000000362">
    <property type="component" value="Chromosome"/>
</dbReference>
<dbReference type="GO" id="GO:0005737">
    <property type="term" value="C:cytoplasm"/>
    <property type="evidence" value="ECO:0007669"/>
    <property type="project" value="UniProtKB-SubCell"/>
</dbReference>
<dbReference type="GO" id="GO:0005524">
    <property type="term" value="F:ATP binding"/>
    <property type="evidence" value="ECO:0007669"/>
    <property type="project" value="UniProtKB-UniRule"/>
</dbReference>
<dbReference type="GO" id="GO:0004413">
    <property type="term" value="F:homoserine kinase activity"/>
    <property type="evidence" value="ECO:0007669"/>
    <property type="project" value="UniProtKB-UniRule"/>
</dbReference>
<dbReference type="GO" id="GO:0009088">
    <property type="term" value="P:threonine biosynthetic process"/>
    <property type="evidence" value="ECO:0007669"/>
    <property type="project" value="UniProtKB-UniRule"/>
</dbReference>
<dbReference type="Gene3D" id="3.30.230.10">
    <property type="match status" value="1"/>
</dbReference>
<dbReference type="Gene3D" id="3.30.70.890">
    <property type="entry name" value="GHMP kinase, C-terminal domain"/>
    <property type="match status" value="1"/>
</dbReference>
<dbReference type="HAMAP" id="MF_00384">
    <property type="entry name" value="Homoser_kinase"/>
    <property type="match status" value="1"/>
</dbReference>
<dbReference type="InterPro" id="IPR013750">
    <property type="entry name" value="GHMP_kinase_C_dom"/>
</dbReference>
<dbReference type="InterPro" id="IPR036554">
    <property type="entry name" value="GHMP_kinase_C_sf"/>
</dbReference>
<dbReference type="InterPro" id="IPR006204">
    <property type="entry name" value="GHMP_kinase_N_dom"/>
</dbReference>
<dbReference type="InterPro" id="IPR006203">
    <property type="entry name" value="GHMP_knse_ATP-bd_CS"/>
</dbReference>
<dbReference type="InterPro" id="IPR000870">
    <property type="entry name" value="Homoserine_kinase"/>
</dbReference>
<dbReference type="InterPro" id="IPR020568">
    <property type="entry name" value="Ribosomal_Su5_D2-typ_SF"/>
</dbReference>
<dbReference type="InterPro" id="IPR014721">
    <property type="entry name" value="Ribsml_uS5_D2-typ_fold_subgr"/>
</dbReference>
<dbReference type="NCBIfam" id="TIGR00191">
    <property type="entry name" value="thrB"/>
    <property type="match status" value="1"/>
</dbReference>
<dbReference type="PANTHER" id="PTHR20861:SF1">
    <property type="entry name" value="HOMOSERINE KINASE"/>
    <property type="match status" value="1"/>
</dbReference>
<dbReference type="PANTHER" id="PTHR20861">
    <property type="entry name" value="HOMOSERINE/4-DIPHOSPHOCYTIDYL-2-C-METHYL-D-ERYTHRITOL KINASE"/>
    <property type="match status" value="1"/>
</dbReference>
<dbReference type="Pfam" id="PF08544">
    <property type="entry name" value="GHMP_kinases_C"/>
    <property type="match status" value="1"/>
</dbReference>
<dbReference type="Pfam" id="PF00288">
    <property type="entry name" value="GHMP_kinases_N"/>
    <property type="match status" value="1"/>
</dbReference>
<dbReference type="PIRSF" id="PIRSF000676">
    <property type="entry name" value="Homoser_kin"/>
    <property type="match status" value="1"/>
</dbReference>
<dbReference type="PRINTS" id="PR00958">
    <property type="entry name" value="HOMSERKINASE"/>
</dbReference>
<dbReference type="SUPFAM" id="SSF55060">
    <property type="entry name" value="GHMP Kinase, C-terminal domain"/>
    <property type="match status" value="1"/>
</dbReference>
<dbReference type="SUPFAM" id="SSF54211">
    <property type="entry name" value="Ribosomal protein S5 domain 2-like"/>
    <property type="match status" value="1"/>
</dbReference>
<dbReference type="PROSITE" id="PS00627">
    <property type="entry name" value="GHMP_KINASES_ATP"/>
    <property type="match status" value="1"/>
</dbReference>
<reference key="1">
    <citation type="journal article" date="2006" name="Proc. Natl. Acad. Sci. U.S.A.">
        <title>Comparative genomics of the lactic acid bacteria.</title>
        <authorList>
            <person name="Makarova K.S."/>
            <person name="Slesarev A."/>
            <person name="Wolf Y.I."/>
            <person name="Sorokin A."/>
            <person name="Mirkin B."/>
            <person name="Koonin E.V."/>
            <person name="Pavlov A."/>
            <person name="Pavlova N."/>
            <person name="Karamychev V."/>
            <person name="Polouchine N."/>
            <person name="Shakhova V."/>
            <person name="Grigoriev I."/>
            <person name="Lou Y."/>
            <person name="Rohksar D."/>
            <person name="Lucas S."/>
            <person name="Huang K."/>
            <person name="Goodstein D.M."/>
            <person name="Hawkins T."/>
            <person name="Plengvidhya V."/>
            <person name="Welker D."/>
            <person name="Hughes J."/>
            <person name="Goh Y."/>
            <person name="Benson A."/>
            <person name="Baldwin K."/>
            <person name="Lee J.-H."/>
            <person name="Diaz-Muniz I."/>
            <person name="Dosti B."/>
            <person name="Smeianov V."/>
            <person name="Wechter W."/>
            <person name="Barabote R."/>
            <person name="Lorca G."/>
            <person name="Altermann E."/>
            <person name="Barrangou R."/>
            <person name="Ganesan B."/>
            <person name="Xie Y."/>
            <person name="Rawsthorne H."/>
            <person name="Tamir D."/>
            <person name="Parker C."/>
            <person name="Breidt F."/>
            <person name="Broadbent J.R."/>
            <person name="Hutkins R."/>
            <person name="O'Sullivan D."/>
            <person name="Steele J."/>
            <person name="Unlu G."/>
            <person name="Saier M.H. Jr."/>
            <person name="Klaenhammer T."/>
            <person name="Richardson P."/>
            <person name="Kozyavkin S."/>
            <person name="Weimer B.C."/>
            <person name="Mills D.A."/>
        </authorList>
    </citation>
    <scope>NUCLEOTIDE SEQUENCE [LARGE SCALE GENOMIC DNA]</scope>
    <source>
        <strain>ATCC 8293 / DSM 20343 / BCRC 11652 / CCM 1803 / JCM 6124 / NCDO 523 / NBRC 100496 / NCIMB 8023 / NCTC 12954 / NRRL B-1118 / 37Y</strain>
    </source>
</reference>
<proteinExistence type="inferred from homology"/>
<comment type="function">
    <text evidence="1">Catalyzes the ATP-dependent phosphorylation of L-homoserine to L-homoserine phosphate.</text>
</comment>
<comment type="catalytic activity">
    <reaction evidence="1">
        <text>L-homoserine + ATP = O-phospho-L-homoserine + ADP + H(+)</text>
        <dbReference type="Rhea" id="RHEA:13985"/>
        <dbReference type="ChEBI" id="CHEBI:15378"/>
        <dbReference type="ChEBI" id="CHEBI:30616"/>
        <dbReference type="ChEBI" id="CHEBI:57476"/>
        <dbReference type="ChEBI" id="CHEBI:57590"/>
        <dbReference type="ChEBI" id="CHEBI:456216"/>
        <dbReference type="EC" id="2.7.1.39"/>
    </reaction>
</comment>
<comment type="pathway">
    <text evidence="1">Amino-acid biosynthesis; L-threonine biosynthesis; L-threonine from L-aspartate: step 4/5.</text>
</comment>
<comment type="subcellular location">
    <subcellularLocation>
        <location evidence="1">Cytoplasm</location>
    </subcellularLocation>
</comment>
<comment type="similarity">
    <text evidence="1">Belongs to the GHMP kinase family. Homoserine kinase subfamily.</text>
</comment>
<accession>Q03Y28</accession>
<keyword id="KW-0028">Amino-acid biosynthesis</keyword>
<keyword id="KW-0067">ATP-binding</keyword>
<keyword id="KW-0963">Cytoplasm</keyword>
<keyword id="KW-0418">Kinase</keyword>
<keyword id="KW-0547">Nucleotide-binding</keyword>
<keyword id="KW-1185">Reference proteome</keyword>
<keyword id="KW-0791">Threonine biosynthesis</keyword>
<keyword id="KW-0808">Transferase</keyword>
<evidence type="ECO:0000255" key="1">
    <source>
        <dbReference type="HAMAP-Rule" id="MF_00384"/>
    </source>
</evidence>
<gene>
    <name evidence="1" type="primary">thrB</name>
    <name type="ordered locus">LEUM_0785</name>
</gene>
<protein>
    <recommendedName>
        <fullName evidence="1">Homoserine kinase</fullName>
        <shortName evidence="1">HK</shortName>
        <shortName evidence="1">HSK</shortName>
        <ecNumber evidence="1">2.7.1.39</ecNumber>
    </recommendedName>
</protein>
<name>KHSE_LEUMM</name>
<sequence length="292" mass="31287">MIKITVPATSANIGPGFDSLGVALKLYLTLEVYEETSEWQVIHDYGANMPSDVNNFIVKTALLLAPNLTPHRIVVKSDIPLARGLGSSSSALLAGLAMANVLADMRLNNDALLKQATALEGHPDNVAPALLGGSVAAFYDGEQVYHAPLSLPKDINFITFIPNYELLTTEARNALPAKMTFKDSVAASAISNTLTAALNAGDFNTARVLIEKDQFHEQARAHLAPHLKIIRDTAHQLEIIGTYLSGAGPTVITLVSKDNATKLLKVLTNMALPGKLLLLEPDYTGLQITKNN</sequence>